<protein>
    <recommendedName>
        <fullName>Protein disulfide-isomerase-like protein of the testis</fullName>
    </recommendedName>
</protein>
<keyword id="KW-0025">Alternative splicing</keyword>
<keyword id="KW-0143">Chaperone</keyword>
<keyword id="KW-0217">Developmental protein</keyword>
<keyword id="KW-0221">Differentiation</keyword>
<keyword id="KW-1015">Disulfide bond</keyword>
<keyword id="KW-0256">Endoplasmic reticulum</keyword>
<keyword id="KW-0325">Glycoprotein</keyword>
<keyword id="KW-0413">Isomerase</keyword>
<keyword id="KW-1185">Reference proteome</keyword>
<keyword id="KW-0732">Signal</keyword>
<keyword id="KW-0744">Spermatogenesis</keyword>
<gene>
    <name type="primary">PDILT</name>
    <name type="ORF">QtsA-10382</name>
    <name type="ORF">QtsA-15920</name>
    <name type="ORF">QtsA-20110</name>
</gene>
<reference key="1">
    <citation type="submission" date="2001-09" db="EMBL/GenBank/DDBJ databases">
        <title>Isolation of novel full-length cDNA clones from macaque testis cDNA libraries.</title>
        <authorList>
            <person name="Hashimoto K."/>
            <person name="Osada N."/>
            <person name="Hida M."/>
            <person name="Kusuda J."/>
            <person name="Tanuma R."/>
            <person name="Hirai M."/>
            <person name="Terao K."/>
            <person name="Sugano S."/>
        </authorList>
    </citation>
    <scope>NUCLEOTIDE SEQUENCE [LARGE SCALE MRNA] (ISOFORMS 2 AND 3)</scope>
    <source>
        <tissue>Testis</tissue>
    </source>
</reference>
<reference key="2">
    <citation type="journal article" date="2002" name="BMC Genomics">
        <title>Cynomolgus monkey testicular cDNAs for discovery of novel human genes in the human genome sequence.</title>
        <authorList>
            <person name="Osada N."/>
            <person name="Hida M."/>
            <person name="Kusuda J."/>
            <person name="Tanuma R."/>
            <person name="Hirata M."/>
            <person name="Suto Y."/>
            <person name="Hirai M."/>
            <person name="Terao K."/>
            <person name="Sugano S."/>
            <person name="Hashimoto K."/>
        </authorList>
    </citation>
    <scope>NUCLEOTIDE SEQUENCE [LARGE SCALE MRNA] (ISOFORM 1)</scope>
    <source>
        <tissue>Testis</tissue>
    </source>
</reference>
<dbReference type="EMBL" id="AB071042">
    <property type="protein sequence ID" value="BAB64435.1"/>
    <property type="molecule type" value="mRNA"/>
</dbReference>
<dbReference type="EMBL" id="AB071063">
    <property type="protein sequence ID" value="BAB64456.1"/>
    <property type="molecule type" value="mRNA"/>
</dbReference>
<dbReference type="EMBL" id="AB072768">
    <property type="protein sequence ID" value="BAB69737.1"/>
    <property type="molecule type" value="mRNA"/>
</dbReference>
<dbReference type="SMR" id="Q95LM0"/>
<dbReference type="STRING" id="9541.ENSMFAP00000030506"/>
<dbReference type="GlyCosmos" id="Q95LM0">
    <property type="glycosylation" value="5 sites, No reported glycans"/>
</dbReference>
<dbReference type="eggNOG" id="KOG0191">
    <property type="taxonomic scope" value="Eukaryota"/>
</dbReference>
<dbReference type="Proteomes" id="UP000233100">
    <property type="component" value="Unplaced"/>
</dbReference>
<dbReference type="GO" id="GO:0005783">
    <property type="term" value="C:endoplasmic reticulum"/>
    <property type="evidence" value="ECO:0007669"/>
    <property type="project" value="UniProtKB-SubCell"/>
</dbReference>
<dbReference type="GO" id="GO:0016853">
    <property type="term" value="F:isomerase activity"/>
    <property type="evidence" value="ECO:0007669"/>
    <property type="project" value="UniProtKB-KW"/>
</dbReference>
<dbReference type="GO" id="GO:0030154">
    <property type="term" value="P:cell differentiation"/>
    <property type="evidence" value="ECO:0007669"/>
    <property type="project" value="UniProtKB-KW"/>
</dbReference>
<dbReference type="GO" id="GO:0006457">
    <property type="term" value="P:protein folding"/>
    <property type="evidence" value="ECO:0007669"/>
    <property type="project" value="TreeGrafter"/>
</dbReference>
<dbReference type="GO" id="GO:0007283">
    <property type="term" value="P:spermatogenesis"/>
    <property type="evidence" value="ECO:0007669"/>
    <property type="project" value="UniProtKB-KW"/>
</dbReference>
<dbReference type="CDD" id="cd02961">
    <property type="entry name" value="PDI_a_family"/>
    <property type="match status" value="1"/>
</dbReference>
<dbReference type="CDD" id="cd02995">
    <property type="entry name" value="PDI_a_PDI_a'_C"/>
    <property type="match status" value="1"/>
</dbReference>
<dbReference type="CDD" id="cd02982">
    <property type="entry name" value="PDI_b'_family"/>
    <property type="match status" value="1"/>
</dbReference>
<dbReference type="CDD" id="cd02981">
    <property type="entry name" value="PDI_b_family"/>
    <property type="match status" value="1"/>
</dbReference>
<dbReference type="FunFam" id="3.40.30.10:FF:000167">
    <property type="entry name" value="Protein disulfide isomerase like, testis expressed"/>
    <property type="match status" value="1"/>
</dbReference>
<dbReference type="FunFam" id="3.40.30.10:FF:000177">
    <property type="entry name" value="Protein disulfide isomerase like, testis expressed"/>
    <property type="match status" value="1"/>
</dbReference>
<dbReference type="FunFam" id="3.40.30.10:FF:000191">
    <property type="entry name" value="Protein disulfide isomerase like, testis expressed"/>
    <property type="match status" value="1"/>
</dbReference>
<dbReference type="FunFam" id="3.40.30.10:FF:000209">
    <property type="entry name" value="Protein disulfide isomerase like, testis expressed"/>
    <property type="match status" value="1"/>
</dbReference>
<dbReference type="Gene3D" id="3.40.30.10">
    <property type="entry name" value="Glutaredoxin"/>
    <property type="match status" value="4"/>
</dbReference>
<dbReference type="InterPro" id="IPR036249">
    <property type="entry name" value="Thioredoxin-like_sf"/>
</dbReference>
<dbReference type="InterPro" id="IPR013766">
    <property type="entry name" value="Thioredoxin_domain"/>
</dbReference>
<dbReference type="PANTHER" id="PTHR18929">
    <property type="entry name" value="PROTEIN DISULFIDE ISOMERASE"/>
    <property type="match status" value="1"/>
</dbReference>
<dbReference type="PANTHER" id="PTHR18929:SF58">
    <property type="entry name" value="PROTEIN DISULFIDE-ISOMERASE-LIKE PROTEIN OF THE TESTIS"/>
    <property type="match status" value="1"/>
</dbReference>
<dbReference type="Pfam" id="PF00085">
    <property type="entry name" value="Thioredoxin"/>
    <property type="match status" value="2"/>
</dbReference>
<dbReference type="Pfam" id="PF13848">
    <property type="entry name" value="Thioredoxin_6"/>
    <property type="match status" value="1"/>
</dbReference>
<dbReference type="SUPFAM" id="SSF52833">
    <property type="entry name" value="Thioredoxin-like"/>
    <property type="match status" value="4"/>
</dbReference>
<dbReference type="PROSITE" id="PS00014">
    <property type="entry name" value="ER_TARGET"/>
    <property type="match status" value="1"/>
</dbReference>
<dbReference type="PROSITE" id="PS51352">
    <property type="entry name" value="THIOREDOXIN_2"/>
    <property type="match status" value="1"/>
</dbReference>
<proteinExistence type="evidence at transcript level"/>
<accession>Q95LM0</accession>
<accession>Q95LX8</accession>
<accession>Q95LZ9</accession>
<organism>
    <name type="scientific">Macaca fascicularis</name>
    <name type="common">Crab-eating macaque</name>
    <name type="synonym">Cynomolgus monkey</name>
    <dbReference type="NCBI Taxonomy" id="9541"/>
    <lineage>
        <taxon>Eukaryota</taxon>
        <taxon>Metazoa</taxon>
        <taxon>Chordata</taxon>
        <taxon>Craniata</taxon>
        <taxon>Vertebrata</taxon>
        <taxon>Euteleostomi</taxon>
        <taxon>Mammalia</taxon>
        <taxon>Eutheria</taxon>
        <taxon>Euarchontoglires</taxon>
        <taxon>Primates</taxon>
        <taxon>Haplorrhini</taxon>
        <taxon>Catarrhini</taxon>
        <taxon>Cercopithecidae</taxon>
        <taxon>Cercopithecinae</taxon>
        <taxon>Macaca</taxon>
    </lineage>
</organism>
<name>PDILT_MACFA</name>
<feature type="signal peptide" evidence="2">
    <location>
        <begin position="1"/>
        <end position="17"/>
    </location>
</feature>
<feature type="chain" id="PRO_0000325850" description="Protein disulfide-isomerase-like protein of the testis">
    <location>
        <begin position="18"/>
        <end position="583"/>
    </location>
</feature>
<feature type="domain" description="Thioredoxin" evidence="3">
    <location>
        <begin position="388"/>
        <end position="451"/>
    </location>
</feature>
<feature type="region of interest" description="Disordered" evidence="5">
    <location>
        <begin position="522"/>
        <end position="583"/>
    </location>
</feature>
<feature type="short sequence motif" description="Prevents secretion from ER" evidence="4">
    <location>
        <begin position="580"/>
        <end position="583"/>
    </location>
</feature>
<feature type="compositionally biased region" description="Basic and acidic residues" evidence="5">
    <location>
        <begin position="522"/>
        <end position="531"/>
    </location>
</feature>
<feature type="compositionally biased region" description="Basic and acidic residues" evidence="5">
    <location>
        <begin position="540"/>
        <end position="559"/>
    </location>
</feature>
<feature type="compositionally biased region" description="Basic residues" evidence="5">
    <location>
        <begin position="573"/>
        <end position="583"/>
    </location>
</feature>
<feature type="glycosylation site" description="N-linked (GlcNAc...) asparagine" evidence="2">
    <location>
        <position position="58"/>
    </location>
</feature>
<feature type="glycosylation site" description="N-linked (GlcNAc...) asparagine" evidence="2">
    <location>
        <position position="128"/>
    </location>
</feature>
<feature type="glycosylation site" description="N-linked (GlcNAc...) asparagine" evidence="2">
    <location>
        <position position="160"/>
    </location>
</feature>
<feature type="glycosylation site" description="N-linked (GlcNAc...) asparagine" evidence="2">
    <location>
        <position position="340"/>
    </location>
</feature>
<feature type="glycosylation site" description="N-linked (GlcNAc...) asparagine" evidence="2">
    <location>
        <position position="540"/>
    </location>
</feature>
<feature type="splice variant" id="VSP_032447" description="In isoform 3." evidence="6">
    <location>
        <begin position="1"/>
        <end position="55"/>
    </location>
</feature>
<feature type="splice variant" id="VSP_032448" description="In isoform 2." evidence="6">
    <location>
        <begin position="527"/>
        <end position="553"/>
    </location>
</feature>
<feature type="sequence conflict" description="In Ref. 2; BAB64435." evidence="7" ref="2">
    <original>Q</original>
    <variation>R</variation>
    <location>
        <position position="375"/>
    </location>
</feature>
<feature type="sequence conflict" description="In Ref. 2; BAB64435." evidence="7" ref="2">
    <original>E</original>
    <variation>G</variation>
    <location>
        <position position="498"/>
    </location>
</feature>
<evidence type="ECO:0000250" key="1"/>
<evidence type="ECO:0000255" key="2"/>
<evidence type="ECO:0000255" key="3">
    <source>
        <dbReference type="PROSITE-ProRule" id="PRU00691"/>
    </source>
</evidence>
<evidence type="ECO:0000255" key="4">
    <source>
        <dbReference type="PROSITE-ProRule" id="PRU10138"/>
    </source>
</evidence>
<evidence type="ECO:0000256" key="5">
    <source>
        <dbReference type="SAM" id="MobiDB-lite"/>
    </source>
</evidence>
<evidence type="ECO:0000303" key="6">
    <source ref="1"/>
</evidence>
<evidence type="ECO:0000305" key="7"/>
<sequence length="583" mass="66848">MDLLWMPLLLVAARISAVHSSPEVNAGVSSIHITKPVHILEERNLLVLTPAGLTQMLNQTRFLMVLFHNPSSKQSRNLAEELGKAVEIMGKGKNGIGFGKVDITVEKELQQEFGITKAPQLKLFFEGNRSEPISCKGVVESTALVVWLRRQISQKAFLFNSSLQVAEFVTSRPLVIVGFFQDLEEEVAELFYDVIKDFPELTFGVITIGNAIGRFHVTLDSILVFKKGKIVNRQELINDSTNKQELNRVIKQHLTDFVIEYNAENKDLIYELYIMSHMLLFVSKSSESFGIIIQHYKLASKEFQNKILFILVNADEPRNRRVIEYFRVTEVDIPSVQILNLSSDARYKMPSDDITYENLKKFGRSFLSKNAKKHQSSEEIPKHWDQGLVKQLVGKNFNIVVFDKEKDVFVMFYAPWSKKCKMLFPLLEELGRKYQNHSTIIIAKIDITANDIQLVYLDRYPFFRLFPTDSQQAVLYKGEHTLKGFSDFLESYIKTSIEDEDELLSVEQNEVIEEEVRAKEKEVPMMKKELPEQQSPELENVTKHVSKLEESAGKKKTSEEVVVVAKPKGPPTQKKKPKVKEEL</sequence>
<comment type="function">
    <text evidence="1">Probable redox-inactive chaperone involved in spermatogenesis.</text>
</comment>
<comment type="subunit">
    <text evidence="1">Homodimer. The homodimer is not disulfide-linked. Interacts with ERO1A and CLGN (By similarity).</text>
</comment>
<comment type="subcellular location">
    <subcellularLocation>
        <location evidence="4">Endoplasmic reticulum</location>
    </subcellularLocation>
</comment>
<comment type="alternative products">
    <event type="alternative splicing"/>
    <isoform>
        <id>Q95LM0-1</id>
        <name>1</name>
        <sequence type="displayed"/>
    </isoform>
    <isoform>
        <id>Q95LM0-2</id>
        <name>2</name>
        <sequence type="described" ref="VSP_032448"/>
    </isoform>
    <isoform>
        <id>Q95LM0-3</id>
        <name>3</name>
        <sequence type="described" ref="VSP_032447"/>
    </isoform>
</comment>
<comment type="domain">
    <text>The thioredoxin domain lacks the conserved redox-active Cys at position 417 which is replaced by a Ser residue, suggesting that it lacks thioredoxin activity.</text>
</comment>
<comment type="PTM">
    <text evidence="1">N-glycosylated.</text>
</comment>
<comment type="similarity">
    <text evidence="7">Belongs to the protein disulfide isomerase family.</text>
</comment>